<dbReference type="EC" id="4.2.3.5" evidence="1"/>
<dbReference type="EMBL" id="CP000387">
    <property type="protein sequence ID" value="ABN44861.1"/>
    <property type="molecule type" value="Genomic_DNA"/>
</dbReference>
<dbReference type="RefSeq" id="WP_002920830.1">
    <property type="nucleotide sequence ID" value="NC_009009.1"/>
</dbReference>
<dbReference type="RefSeq" id="YP_001035411.1">
    <property type="nucleotide sequence ID" value="NC_009009.1"/>
</dbReference>
<dbReference type="SMR" id="A3CNV6"/>
<dbReference type="STRING" id="388919.SSA_1467"/>
<dbReference type="KEGG" id="ssa:SSA_1467"/>
<dbReference type="PATRIC" id="fig|388919.9.peg.1392"/>
<dbReference type="eggNOG" id="COG0082">
    <property type="taxonomic scope" value="Bacteria"/>
</dbReference>
<dbReference type="HOGENOM" id="CLU_034547_2_0_9"/>
<dbReference type="OrthoDB" id="9771806at2"/>
<dbReference type="UniPathway" id="UPA00053">
    <property type="reaction ID" value="UER00090"/>
</dbReference>
<dbReference type="Proteomes" id="UP000002148">
    <property type="component" value="Chromosome"/>
</dbReference>
<dbReference type="GO" id="GO:0005829">
    <property type="term" value="C:cytosol"/>
    <property type="evidence" value="ECO:0007669"/>
    <property type="project" value="TreeGrafter"/>
</dbReference>
<dbReference type="GO" id="GO:0004107">
    <property type="term" value="F:chorismate synthase activity"/>
    <property type="evidence" value="ECO:0007669"/>
    <property type="project" value="UniProtKB-UniRule"/>
</dbReference>
<dbReference type="GO" id="GO:0010181">
    <property type="term" value="F:FMN binding"/>
    <property type="evidence" value="ECO:0007669"/>
    <property type="project" value="TreeGrafter"/>
</dbReference>
<dbReference type="GO" id="GO:0008652">
    <property type="term" value="P:amino acid biosynthetic process"/>
    <property type="evidence" value="ECO:0007669"/>
    <property type="project" value="UniProtKB-KW"/>
</dbReference>
<dbReference type="GO" id="GO:0009073">
    <property type="term" value="P:aromatic amino acid family biosynthetic process"/>
    <property type="evidence" value="ECO:0007669"/>
    <property type="project" value="UniProtKB-KW"/>
</dbReference>
<dbReference type="GO" id="GO:0009423">
    <property type="term" value="P:chorismate biosynthetic process"/>
    <property type="evidence" value="ECO:0007669"/>
    <property type="project" value="UniProtKB-UniRule"/>
</dbReference>
<dbReference type="CDD" id="cd07304">
    <property type="entry name" value="Chorismate_synthase"/>
    <property type="match status" value="1"/>
</dbReference>
<dbReference type="FunFam" id="3.60.150.10:FF:000002">
    <property type="entry name" value="Chorismate synthase"/>
    <property type="match status" value="1"/>
</dbReference>
<dbReference type="Gene3D" id="3.60.150.10">
    <property type="entry name" value="Chorismate synthase AroC"/>
    <property type="match status" value="1"/>
</dbReference>
<dbReference type="HAMAP" id="MF_00300">
    <property type="entry name" value="Chorismate_synth"/>
    <property type="match status" value="1"/>
</dbReference>
<dbReference type="InterPro" id="IPR000453">
    <property type="entry name" value="Chorismate_synth"/>
</dbReference>
<dbReference type="InterPro" id="IPR035904">
    <property type="entry name" value="Chorismate_synth_AroC_sf"/>
</dbReference>
<dbReference type="InterPro" id="IPR020541">
    <property type="entry name" value="Chorismate_synthase_CS"/>
</dbReference>
<dbReference type="NCBIfam" id="TIGR00033">
    <property type="entry name" value="aroC"/>
    <property type="match status" value="1"/>
</dbReference>
<dbReference type="NCBIfam" id="NF003793">
    <property type="entry name" value="PRK05382.1"/>
    <property type="match status" value="1"/>
</dbReference>
<dbReference type="PANTHER" id="PTHR21085">
    <property type="entry name" value="CHORISMATE SYNTHASE"/>
    <property type="match status" value="1"/>
</dbReference>
<dbReference type="PANTHER" id="PTHR21085:SF0">
    <property type="entry name" value="CHORISMATE SYNTHASE"/>
    <property type="match status" value="1"/>
</dbReference>
<dbReference type="Pfam" id="PF01264">
    <property type="entry name" value="Chorismate_synt"/>
    <property type="match status" value="1"/>
</dbReference>
<dbReference type="PIRSF" id="PIRSF001456">
    <property type="entry name" value="Chorismate_synth"/>
    <property type="match status" value="1"/>
</dbReference>
<dbReference type="SUPFAM" id="SSF103263">
    <property type="entry name" value="Chorismate synthase, AroC"/>
    <property type="match status" value="1"/>
</dbReference>
<dbReference type="PROSITE" id="PS00787">
    <property type="entry name" value="CHORISMATE_SYNTHASE_1"/>
    <property type="match status" value="1"/>
</dbReference>
<dbReference type="PROSITE" id="PS00788">
    <property type="entry name" value="CHORISMATE_SYNTHASE_2"/>
    <property type="match status" value="1"/>
</dbReference>
<dbReference type="PROSITE" id="PS00789">
    <property type="entry name" value="CHORISMATE_SYNTHASE_3"/>
    <property type="match status" value="1"/>
</dbReference>
<comment type="function">
    <text evidence="1">Catalyzes the anti-1,4-elimination of the C-3 phosphate and the C-6 proR hydrogen from 5-enolpyruvylshikimate-3-phosphate (EPSP) to yield chorismate, which is the branch point compound that serves as the starting substrate for the three terminal pathways of aromatic amino acid biosynthesis. This reaction introduces a second double bond into the aromatic ring system.</text>
</comment>
<comment type="catalytic activity">
    <reaction evidence="1">
        <text>5-O-(1-carboxyvinyl)-3-phosphoshikimate = chorismate + phosphate</text>
        <dbReference type="Rhea" id="RHEA:21020"/>
        <dbReference type="ChEBI" id="CHEBI:29748"/>
        <dbReference type="ChEBI" id="CHEBI:43474"/>
        <dbReference type="ChEBI" id="CHEBI:57701"/>
        <dbReference type="EC" id="4.2.3.5"/>
    </reaction>
</comment>
<comment type="cofactor">
    <cofactor evidence="1">
        <name>FMNH2</name>
        <dbReference type="ChEBI" id="CHEBI:57618"/>
    </cofactor>
    <text evidence="1">Reduced FMN (FMNH(2)).</text>
</comment>
<comment type="pathway">
    <text evidence="1">Metabolic intermediate biosynthesis; chorismate biosynthesis; chorismate from D-erythrose 4-phosphate and phosphoenolpyruvate: step 7/7.</text>
</comment>
<comment type="subunit">
    <text evidence="1">Homotetramer.</text>
</comment>
<comment type="similarity">
    <text evidence="1">Belongs to the chorismate synthase family.</text>
</comment>
<proteinExistence type="inferred from homology"/>
<accession>A3CNV6</accession>
<organism>
    <name type="scientific">Streptococcus sanguinis (strain SK36)</name>
    <dbReference type="NCBI Taxonomy" id="388919"/>
    <lineage>
        <taxon>Bacteria</taxon>
        <taxon>Bacillati</taxon>
        <taxon>Bacillota</taxon>
        <taxon>Bacilli</taxon>
        <taxon>Lactobacillales</taxon>
        <taxon>Streptococcaceae</taxon>
        <taxon>Streptococcus</taxon>
    </lineage>
</organism>
<sequence>MRYLTAGESHGPRLTAIIEGVPAGLPLTADYINAELKRRQGGYGRGARMKIESDQVEITSGVRHGLTMGGPITLNVTNLDHQKWQEIMSAADVDEKKKGLRKITKPRPGHADLVGGMKYRFDDLRNSLERSSARETTMRVAVGAVAKRLLEEIGVEVASHIVTFGGIDINVPNNLTVGEIKERAAQSEVSIVNPDREEEIKAYIDQIKKDGDTIGGVIETVVGGVPVGLGSYVQWDKKLDAKIAQGVVSINAFKGVEFGVGFEAGRLKGSQVMDEILWSEEDGFTRRTNNLGGFEGGMTNGQPIVVRGVMKPIPTLYKPLMSVDIETHEPYKATVERSDPTALPAAGVVMESVVATVLATEVLEKFSSDNLEELKDAVARHREFVKNF</sequence>
<keyword id="KW-0028">Amino-acid biosynthesis</keyword>
<keyword id="KW-0057">Aromatic amino acid biosynthesis</keyword>
<keyword id="KW-0274">FAD</keyword>
<keyword id="KW-0285">Flavoprotein</keyword>
<keyword id="KW-0288">FMN</keyword>
<keyword id="KW-0456">Lyase</keyword>
<keyword id="KW-0521">NADP</keyword>
<keyword id="KW-1185">Reference proteome</keyword>
<name>AROC_STRSV</name>
<protein>
    <recommendedName>
        <fullName evidence="1">Chorismate synthase</fullName>
        <shortName evidence="1">CS</shortName>
        <ecNumber evidence="1">4.2.3.5</ecNumber>
    </recommendedName>
    <alternativeName>
        <fullName evidence="1">5-enolpyruvylshikimate-3-phosphate phospholyase</fullName>
    </alternativeName>
</protein>
<evidence type="ECO:0000255" key="1">
    <source>
        <dbReference type="HAMAP-Rule" id="MF_00300"/>
    </source>
</evidence>
<gene>
    <name evidence="1" type="primary">aroC</name>
    <name type="ordered locus">SSA_1467</name>
</gene>
<feature type="chain" id="PRO_0000322425" description="Chorismate synthase">
    <location>
        <begin position="1"/>
        <end position="388"/>
    </location>
</feature>
<feature type="binding site" evidence="1">
    <location>
        <position position="39"/>
    </location>
    <ligand>
        <name>NADP(+)</name>
        <dbReference type="ChEBI" id="CHEBI:58349"/>
    </ligand>
</feature>
<feature type="binding site" evidence="1">
    <location>
        <position position="45"/>
    </location>
    <ligand>
        <name>NADP(+)</name>
        <dbReference type="ChEBI" id="CHEBI:58349"/>
    </ligand>
</feature>
<feature type="binding site" evidence="1">
    <location>
        <begin position="130"/>
        <end position="132"/>
    </location>
    <ligand>
        <name>FMN</name>
        <dbReference type="ChEBI" id="CHEBI:58210"/>
    </ligand>
</feature>
<feature type="binding site" evidence="1">
    <location>
        <begin position="251"/>
        <end position="252"/>
    </location>
    <ligand>
        <name>FMN</name>
        <dbReference type="ChEBI" id="CHEBI:58210"/>
    </ligand>
</feature>
<feature type="binding site" evidence="1">
    <location>
        <position position="296"/>
    </location>
    <ligand>
        <name>FMN</name>
        <dbReference type="ChEBI" id="CHEBI:58210"/>
    </ligand>
</feature>
<feature type="binding site" evidence="1">
    <location>
        <begin position="311"/>
        <end position="315"/>
    </location>
    <ligand>
        <name>FMN</name>
        <dbReference type="ChEBI" id="CHEBI:58210"/>
    </ligand>
</feature>
<feature type="binding site" evidence="1">
    <location>
        <position position="337"/>
    </location>
    <ligand>
        <name>FMN</name>
        <dbReference type="ChEBI" id="CHEBI:58210"/>
    </ligand>
</feature>
<reference key="1">
    <citation type="journal article" date="2007" name="J. Bacteriol.">
        <title>Genome of the opportunistic pathogen Streptococcus sanguinis.</title>
        <authorList>
            <person name="Xu P."/>
            <person name="Alves J.M."/>
            <person name="Kitten T."/>
            <person name="Brown A."/>
            <person name="Chen Z."/>
            <person name="Ozaki L.S."/>
            <person name="Manque P."/>
            <person name="Ge X."/>
            <person name="Serrano M.G."/>
            <person name="Puiu D."/>
            <person name="Hendricks S."/>
            <person name="Wang Y."/>
            <person name="Chaplin M.D."/>
            <person name="Akan D."/>
            <person name="Paik S."/>
            <person name="Peterson D.L."/>
            <person name="Macrina F.L."/>
            <person name="Buck G.A."/>
        </authorList>
    </citation>
    <scope>NUCLEOTIDE SEQUENCE [LARGE SCALE GENOMIC DNA]</scope>
    <source>
        <strain>SK36</strain>
    </source>
</reference>